<sequence length="17" mass="1882">EGCCSNPPCRHNHPEVC</sequence>
<dbReference type="GO" id="GO:0005576">
    <property type="term" value="C:extracellular region"/>
    <property type="evidence" value="ECO:0007669"/>
    <property type="project" value="UniProtKB-SubCell"/>
</dbReference>
<dbReference type="GO" id="GO:0035792">
    <property type="term" value="C:host cell postsynaptic membrane"/>
    <property type="evidence" value="ECO:0007669"/>
    <property type="project" value="UniProtKB-KW"/>
</dbReference>
<dbReference type="GO" id="GO:0030550">
    <property type="term" value="F:acetylcholine receptor inhibitor activity"/>
    <property type="evidence" value="ECO:0007669"/>
    <property type="project" value="UniProtKB-KW"/>
</dbReference>
<dbReference type="GO" id="GO:0099106">
    <property type="term" value="F:ion channel regulator activity"/>
    <property type="evidence" value="ECO:0007669"/>
    <property type="project" value="UniProtKB-KW"/>
</dbReference>
<dbReference type="GO" id="GO:0090729">
    <property type="term" value="F:toxin activity"/>
    <property type="evidence" value="ECO:0007669"/>
    <property type="project" value="UniProtKB-KW"/>
</dbReference>
<dbReference type="InterPro" id="IPR009958">
    <property type="entry name" value="Conotoxin_a-typ"/>
</dbReference>
<dbReference type="InterPro" id="IPR018072">
    <property type="entry name" value="Conotoxin_a-typ_CS"/>
</dbReference>
<dbReference type="Pfam" id="PF07365">
    <property type="entry name" value="Toxin_8"/>
    <property type="match status" value="1"/>
</dbReference>
<dbReference type="PROSITE" id="PS60014">
    <property type="entry name" value="ALPHA_CONOTOXIN"/>
    <property type="match status" value="1"/>
</dbReference>
<feature type="peptide" id="PRO_0000453222" description="Alpha-conotoxin In1907" evidence="3">
    <location>
        <begin position="1"/>
        <end position="17"/>
    </location>
</feature>
<feature type="region of interest" description="Ser-Xaa-Pro motif, crucial for potent interaction with nAChR" evidence="1">
    <location>
        <begin position="5"/>
        <end position="7"/>
    </location>
</feature>
<feature type="modified residue" description="Pyrrolidone carboxylic acid (Glu); partial; in In1874 and In1857" evidence="3">
    <location>
        <position position="1"/>
    </location>
</feature>
<feature type="modified residue" description="4-hydroxyproline; partial; in In1907, In1891 and In1874" evidence="3">
    <location>
        <position position="8"/>
    </location>
</feature>
<feature type="modified residue" description="4-hydroxyproline; partial; in In1907" evidence="3">
    <location>
        <position position="14"/>
    </location>
</feature>
<feature type="modified residue" description="Cysteine amide" evidence="3">
    <location>
        <position position="17"/>
    </location>
</feature>
<feature type="disulfide bond" evidence="2">
    <location>
        <begin position="3"/>
        <end position="9"/>
    </location>
</feature>
<feature type="disulfide bond" evidence="2">
    <location>
        <begin position="4"/>
        <end position="17"/>
    </location>
</feature>
<accession>P0DUR0</accession>
<organism>
    <name type="scientific">Conus inscriptus</name>
    <name type="common">Engraved cone</name>
    <dbReference type="NCBI Taxonomy" id="257329"/>
    <lineage>
        <taxon>Eukaryota</taxon>
        <taxon>Metazoa</taxon>
        <taxon>Spiralia</taxon>
        <taxon>Lophotrochozoa</taxon>
        <taxon>Mollusca</taxon>
        <taxon>Gastropoda</taxon>
        <taxon>Caenogastropoda</taxon>
        <taxon>Neogastropoda</taxon>
        <taxon>Conoidea</taxon>
        <taxon>Conidae</taxon>
        <taxon>Conus</taxon>
        <taxon>Phasmoconus</taxon>
    </lineage>
</organism>
<reference key="1">
    <citation type="journal article" date="2021" name="Saudi J. Biol. Sci.">
        <title>Mass spectrometric identification and denovo sequencing of novel conotoxins from vermivorous cone snail (Conus inscriptus), and preliminary screening of its venom for biological activities in vitro and in vivo.</title>
        <authorList>
            <person name="Jain R.P."/>
            <person name="Jayaseelan B.F."/>
            <person name="Wilson Alphonse C.R."/>
            <person name="Mahmoud A.H."/>
            <person name="Mohammed O.B."/>
            <person name="Ahmed Almunqedhi B.M."/>
            <person name="Rajaian Pushpabai R."/>
        </authorList>
    </citation>
    <scope>PROTEIN SEQUENCE</scope>
    <scope>SUBCELLULAR LOCATION</scope>
    <scope>MASS SPECTROMETRY</scope>
    <scope>PYROGLUTAMATE FORMATION AT GLU-1</scope>
    <scope>HYDROXYLATION AT PRO-8 AND PRO-14</scope>
    <scope>AMIDATION AT CYS-17</scope>
    <source>
        <tissue>Venom</tissue>
    </source>
</reference>
<evidence type="ECO:0000250" key="1">
    <source>
        <dbReference type="UniProtKB" id="P56636"/>
    </source>
</evidence>
<evidence type="ECO:0000250" key="2">
    <source>
        <dbReference type="UniProtKB" id="X1WB75"/>
    </source>
</evidence>
<evidence type="ECO:0000269" key="3">
    <source>
    </source>
</evidence>
<evidence type="ECO:0000303" key="4">
    <source>
    </source>
</evidence>
<evidence type="ECO:0000305" key="5"/>
<evidence type="ECO:0000305" key="6">
    <source>
    </source>
</evidence>
<proteinExistence type="evidence at protein level"/>
<keyword id="KW-0008">Acetylcholine receptor inhibiting toxin</keyword>
<keyword id="KW-0027">Amidation</keyword>
<keyword id="KW-0903">Direct protein sequencing</keyword>
<keyword id="KW-1015">Disulfide bond</keyword>
<keyword id="KW-0379">Hydroxylation</keyword>
<keyword id="KW-0872">Ion channel impairing toxin</keyword>
<keyword id="KW-0528">Neurotoxin</keyword>
<keyword id="KW-0629">Postsynaptic neurotoxin</keyword>
<keyword id="KW-0873">Pyrrolidone carboxylic acid</keyword>
<keyword id="KW-0964">Secreted</keyword>
<keyword id="KW-0800">Toxin</keyword>
<protein>
    <recommendedName>
        <fullName evidence="4">Alpha-conotoxin In1907</fullName>
    </recommendedName>
    <alternativeName>
        <fullName evidence="4">Alpha-conotoxin In1857</fullName>
    </alternativeName>
    <alternativeName>
        <fullName evidence="4">Alpha-conotoxin In1874</fullName>
    </alternativeName>
    <alternativeName>
        <fullName evidence="4">Alpha-conotoxin In1891</fullName>
    </alternativeName>
</protein>
<name>CA907_CONIN</name>
<comment type="function">
    <text evidence="2">Alpha-conotoxins act on postsynaptic membranes, they bind to the nicotinic acetylcholine receptors (nAChR) and thus inhibit them.</text>
</comment>
<comment type="subcellular location">
    <subcellularLocation>
        <location evidence="3">Secreted</location>
    </subcellularLocation>
</comment>
<comment type="tissue specificity">
    <text evidence="6">Expressed by the venom duct.</text>
</comment>
<comment type="domain">
    <text evidence="5">The cysteine framework is I (CC-C-C). Alpha4/7 pattern.</text>
</comment>
<comment type="PTM">
    <text evidence="6">Exists in 4 forms due to different PTMs (In1907, In1891, In1874, and In1857).</text>
</comment>
<comment type="mass spectrometry" mass="1907.7" method="MALDI" evidence="3">
    <text>Hydroxylation at 'Pro-8' and 'Pro-14' (In1907).</text>
</comment>
<comment type="mass spectrometry" mass="1891.7" method="MALDI" evidence="3">
    <text>Hydroxylation at 'Pro-8' (In1891).</text>
</comment>
<comment type="mass spectrometry" mass="1874.7" method="MALDI" evidence="3">
    <text>Pyrrolidone carboxylic acid at 'Glu-1' and hydroxylation at 'Pro-8' (In1874).</text>
</comment>
<comment type="mass spectrometry" mass="1857.6" method="MALDI" evidence="3">
    <text>Pyrrolidone carboxylic acid at 'Glu-1' (In1857).</text>
</comment>
<comment type="similarity">
    <text evidence="5">Belongs to the conotoxin A superfamily.</text>
</comment>